<keyword id="KW-0067">ATP-binding</keyword>
<keyword id="KW-0963">Cytoplasm</keyword>
<keyword id="KW-0210">Decarboxylase</keyword>
<keyword id="KW-0312">Gluconeogenesis</keyword>
<keyword id="KW-0456">Lyase</keyword>
<keyword id="KW-0464">Manganese</keyword>
<keyword id="KW-0479">Metal-binding</keyword>
<keyword id="KW-0547">Nucleotide-binding</keyword>
<keyword id="KW-1185">Reference proteome</keyword>
<feature type="chain" id="PRO_0000203828" description="Phosphoenolpyruvate carboxykinase (ATP)">
    <location>
        <begin position="1"/>
        <end position="527"/>
    </location>
</feature>
<feature type="binding site" evidence="1">
    <location>
        <position position="54"/>
    </location>
    <ligand>
        <name>substrate</name>
    </ligand>
</feature>
<feature type="binding site" evidence="1">
    <location>
        <position position="190"/>
    </location>
    <ligand>
        <name>substrate</name>
    </ligand>
</feature>
<feature type="binding site" evidence="1">
    <location>
        <position position="196"/>
    </location>
    <ligand>
        <name>ATP</name>
        <dbReference type="ChEBI" id="CHEBI:30616"/>
    </ligand>
</feature>
<feature type="binding site" evidence="1">
    <location>
        <position position="196"/>
    </location>
    <ligand>
        <name>Mn(2+)</name>
        <dbReference type="ChEBI" id="CHEBI:29035"/>
    </ligand>
</feature>
<feature type="binding site" evidence="1">
    <location>
        <position position="196"/>
    </location>
    <ligand>
        <name>substrate</name>
    </ligand>
</feature>
<feature type="binding site" evidence="1">
    <location>
        <position position="215"/>
    </location>
    <ligand>
        <name>ATP</name>
        <dbReference type="ChEBI" id="CHEBI:30616"/>
    </ligand>
</feature>
<feature type="binding site" evidence="1">
    <location>
        <position position="215"/>
    </location>
    <ligand>
        <name>Mn(2+)</name>
        <dbReference type="ChEBI" id="CHEBI:29035"/>
    </ligand>
</feature>
<feature type="binding site" evidence="1">
    <location>
        <begin position="231"/>
        <end position="239"/>
    </location>
    <ligand>
        <name>ATP</name>
        <dbReference type="ChEBI" id="CHEBI:30616"/>
    </ligand>
</feature>
<feature type="binding site" evidence="1">
    <location>
        <position position="252"/>
    </location>
    <ligand>
        <name>Mn(2+)</name>
        <dbReference type="ChEBI" id="CHEBI:29035"/>
    </ligand>
</feature>
<feature type="binding site" evidence="1">
    <location>
        <position position="280"/>
    </location>
    <ligand>
        <name>ATP</name>
        <dbReference type="ChEBI" id="CHEBI:30616"/>
    </ligand>
</feature>
<feature type="binding site" evidence="1">
    <location>
        <position position="317"/>
    </location>
    <ligand>
        <name>ATP</name>
        <dbReference type="ChEBI" id="CHEBI:30616"/>
    </ligand>
</feature>
<feature type="binding site" evidence="1">
    <location>
        <position position="317"/>
    </location>
    <ligand>
        <name>substrate</name>
    </ligand>
</feature>
<feature type="binding site" evidence="1">
    <location>
        <begin position="436"/>
        <end position="437"/>
    </location>
    <ligand>
        <name>ATP</name>
        <dbReference type="ChEBI" id="CHEBI:30616"/>
    </ligand>
</feature>
<feature type="binding site" evidence="1">
    <location>
        <position position="442"/>
    </location>
    <ligand>
        <name>ATP</name>
        <dbReference type="ChEBI" id="CHEBI:30616"/>
    </ligand>
</feature>
<organism>
    <name type="scientific">Oceanobacillus iheyensis (strain DSM 14371 / CIP 107618 / JCM 11309 / KCTC 3954 / HTE831)</name>
    <dbReference type="NCBI Taxonomy" id="221109"/>
    <lineage>
        <taxon>Bacteria</taxon>
        <taxon>Bacillati</taxon>
        <taxon>Bacillota</taxon>
        <taxon>Bacilli</taxon>
        <taxon>Bacillales</taxon>
        <taxon>Bacillaceae</taxon>
        <taxon>Oceanobacillus</taxon>
    </lineage>
</organism>
<name>PCKA_OCEIH</name>
<dbReference type="EC" id="4.1.1.49" evidence="1"/>
<dbReference type="EMBL" id="BA000028">
    <property type="protein sequence ID" value="BAC14271.1"/>
    <property type="molecule type" value="Genomic_DNA"/>
</dbReference>
<dbReference type="RefSeq" id="WP_011066708.1">
    <property type="nucleotide sequence ID" value="NC_004193.1"/>
</dbReference>
<dbReference type="SMR" id="Q8EP04"/>
<dbReference type="STRING" id="221109.gene:10734566"/>
<dbReference type="KEGG" id="oih:OB2315"/>
<dbReference type="eggNOG" id="COG1866">
    <property type="taxonomic scope" value="Bacteria"/>
</dbReference>
<dbReference type="HOGENOM" id="CLU_018247_0_1_9"/>
<dbReference type="OrthoDB" id="9806325at2"/>
<dbReference type="PhylomeDB" id="Q8EP04"/>
<dbReference type="UniPathway" id="UPA00138"/>
<dbReference type="Proteomes" id="UP000000822">
    <property type="component" value="Chromosome"/>
</dbReference>
<dbReference type="GO" id="GO:0005829">
    <property type="term" value="C:cytosol"/>
    <property type="evidence" value="ECO:0007669"/>
    <property type="project" value="TreeGrafter"/>
</dbReference>
<dbReference type="GO" id="GO:0005524">
    <property type="term" value="F:ATP binding"/>
    <property type="evidence" value="ECO:0007669"/>
    <property type="project" value="UniProtKB-UniRule"/>
</dbReference>
<dbReference type="GO" id="GO:0046872">
    <property type="term" value="F:metal ion binding"/>
    <property type="evidence" value="ECO:0007669"/>
    <property type="project" value="UniProtKB-KW"/>
</dbReference>
<dbReference type="GO" id="GO:0004612">
    <property type="term" value="F:phosphoenolpyruvate carboxykinase (ATP) activity"/>
    <property type="evidence" value="ECO:0007669"/>
    <property type="project" value="UniProtKB-UniRule"/>
</dbReference>
<dbReference type="GO" id="GO:0006094">
    <property type="term" value="P:gluconeogenesis"/>
    <property type="evidence" value="ECO:0007669"/>
    <property type="project" value="UniProtKB-UniRule"/>
</dbReference>
<dbReference type="CDD" id="cd00484">
    <property type="entry name" value="PEPCK_ATP"/>
    <property type="match status" value="1"/>
</dbReference>
<dbReference type="FunFam" id="2.170.8.10:FF:000001">
    <property type="entry name" value="Phosphoenolpyruvate carboxykinase (ATP)"/>
    <property type="match status" value="1"/>
</dbReference>
<dbReference type="Gene3D" id="3.90.228.20">
    <property type="match status" value="1"/>
</dbReference>
<dbReference type="Gene3D" id="3.40.449.10">
    <property type="entry name" value="Phosphoenolpyruvate Carboxykinase, domain 1"/>
    <property type="match status" value="1"/>
</dbReference>
<dbReference type="Gene3D" id="2.170.8.10">
    <property type="entry name" value="Phosphoenolpyruvate Carboxykinase, domain 2"/>
    <property type="match status" value="1"/>
</dbReference>
<dbReference type="HAMAP" id="MF_00453">
    <property type="entry name" value="PEPCK_ATP"/>
    <property type="match status" value="1"/>
</dbReference>
<dbReference type="InterPro" id="IPR001272">
    <property type="entry name" value="PEP_carboxykinase_ATP"/>
</dbReference>
<dbReference type="InterPro" id="IPR013035">
    <property type="entry name" value="PEP_carboxykinase_C"/>
</dbReference>
<dbReference type="InterPro" id="IPR008210">
    <property type="entry name" value="PEP_carboxykinase_N"/>
</dbReference>
<dbReference type="InterPro" id="IPR015994">
    <property type="entry name" value="PEPCK_ATP_CS"/>
</dbReference>
<dbReference type="NCBIfam" id="TIGR00224">
    <property type="entry name" value="pckA"/>
    <property type="match status" value="1"/>
</dbReference>
<dbReference type="NCBIfam" id="NF006820">
    <property type="entry name" value="PRK09344.1-2"/>
    <property type="match status" value="1"/>
</dbReference>
<dbReference type="NCBIfam" id="NF006821">
    <property type="entry name" value="PRK09344.1-3"/>
    <property type="match status" value="1"/>
</dbReference>
<dbReference type="PANTHER" id="PTHR30031:SF0">
    <property type="entry name" value="PHOSPHOENOLPYRUVATE CARBOXYKINASE (ATP)"/>
    <property type="match status" value="1"/>
</dbReference>
<dbReference type="PANTHER" id="PTHR30031">
    <property type="entry name" value="PHOSPHOENOLPYRUVATE CARBOXYKINASE ATP"/>
    <property type="match status" value="1"/>
</dbReference>
<dbReference type="Pfam" id="PF01293">
    <property type="entry name" value="PEPCK_ATP"/>
    <property type="match status" value="1"/>
</dbReference>
<dbReference type="PIRSF" id="PIRSF006294">
    <property type="entry name" value="PEP_crbxkin"/>
    <property type="match status" value="1"/>
</dbReference>
<dbReference type="SUPFAM" id="SSF68923">
    <property type="entry name" value="PEP carboxykinase N-terminal domain"/>
    <property type="match status" value="1"/>
</dbReference>
<dbReference type="SUPFAM" id="SSF53795">
    <property type="entry name" value="PEP carboxykinase-like"/>
    <property type="match status" value="1"/>
</dbReference>
<dbReference type="PROSITE" id="PS00532">
    <property type="entry name" value="PEPCK_ATP"/>
    <property type="match status" value="1"/>
</dbReference>
<reference key="1">
    <citation type="journal article" date="2002" name="Nucleic Acids Res.">
        <title>Genome sequence of Oceanobacillus iheyensis isolated from the Iheya Ridge and its unexpected adaptive capabilities to extreme environments.</title>
        <authorList>
            <person name="Takami H."/>
            <person name="Takaki Y."/>
            <person name="Uchiyama I."/>
        </authorList>
    </citation>
    <scope>NUCLEOTIDE SEQUENCE [LARGE SCALE GENOMIC DNA]</scope>
    <source>
        <strain>DSM 14371 / CIP 107618 / JCM 11309 / KCTC 3954 / HTE831</strain>
    </source>
</reference>
<sequence>MKTVDKSYMKELQTNHIHHNLSVAQLVEKILYRQEGILTSTGAVRATTGTYTGRSPEDKFTVKDEVSDQHVNWGKVNKPIQEEVFNQLLSKVISYLNEKQEIFKFQGFAGSDHTYRLPIQVINEYAWHNLFSRQLFITPTEEELNNHQAEFTVISAPGFKADPAIDGTNSETFILISFKKRIVLIGGTEYAGEIKKSIFSVMNYLLPQQDVLSMHCSANVGQEGDVALFFGLSGTGKTTLSADPYRKLIGDDEHGWSPNGVFNIEGGCYAKCINLSEEKEPQIYNAIRYGTVLENVILNDNSREPDYDDTSLTENTRAAYPLENIDNIINPSVAGHPNTIIFLTADASGTLPPISKLTKEQAMYHFLSGYTSKLAGTERGVTEPLATFSACFGSPFLPLAPSKYAEMLGKKIDMFDTNVFLINTGWTGGSYGVGDRIKLSFTRAMVHSALEGELNSIETITDEIFGLQIPAHVPGVPDELLVPKQTWGNKEAYMKEAQTLALKFHENFKKFTLASETIKQAGPLYKG</sequence>
<evidence type="ECO:0000255" key="1">
    <source>
        <dbReference type="HAMAP-Rule" id="MF_00453"/>
    </source>
</evidence>
<proteinExistence type="inferred from homology"/>
<gene>
    <name evidence="1" type="primary">pckA</name>
    <name type="ordered locus">OB2315</name>
</gene>
<accession>Q8EP04</accession>
<comment type="function">
    <text evidence="1">Involved in the gluconeogenesis. Catalyzes the conversion of oxaloacetate (OAA) to phosphoenolpyruvate (PEP) through direct phosphoryl transfer between the nucleoside triphosphate and OAA.</text>
</comment>
<comment type="catalytic activity">
    <reaction evidence="1">
        <text>oxaloacetate + ATP = phosphoenolpyruvate + ADP + CO2</text>
        <dbReference type="Rhea" id="RHEA:18617"/>
        <dbReference type="ChEBI" id="CHEBI:16452"/>
        <dbReference type="ChEBI" id="CHEBI:16526"/>
        <dbReference type="ChEBI" id="CHEBI:30616"/>
        <dbReference type="ChEBI" id="CHEBI:58702"/>
        <dbReference type="ChEBI" id="CHEBI:456216"/>
        <dbReference type="EC" id="4.1.1.49"/>
    </reaction>
</comment>
<comment type="cofactor">
    <cofactor evidence="1">
        <name>Mn(2+)</name>
        <dbReference type="ChEBI" id="CHEBI:29035"/>
    </cofactor>
    <text evidence="1">Binds 1 Mn(2+) ion per subunit.</text>
</comment>
<comment type="pathway">
    <text evidence="1">Carbohydrate biosynthesis; gluconeogenesis.</text>
</comment>
<comment type="subcellular location">
    <subcellularLocation>
        <location evidence="1">Cytoplasm</location>
    </subcellularLocation>
</comment>
<comment type="similarity">
    <text evidence="1">Belongs to the phosphoenolpyruvate carboxykinase (ATP) family.</text>
</comment>
<protein>
    <recommendedName>
        <fullName evidence="1">Phosphoenolpyruvate carboxykinase (ATP)</fullName>
        <shortName evidence="1">PCK</shortName>
        <shortName evidence="1">PEP carboxykinase</shortName>
        <shortName evidence="1">PEPCK</shortName>
        <ecNumber evidence="1">4.1.1.49</ecNumber>
    </recommendedName>
</protein>